<accession>B0SUQ4</accession>
<reference key="1">
    <citation type="submission" date="2008-01" db="EMBL/GenBank/DDBJ databases">
        <title>Complete sequence of chromosome of Caulobacter sp. K31.</title>
        <authorList>
            <consortium name="US DOE Joint Genome Institute"/>
            <person name="Copeland A."/>
            <person name="Lucas S."/>
            <person name="Lapidus A."/>
            <person name="Barry K."/>
            <person name="Glavina del Rio T."/>
            <person name="Dalin E."/>
            <person name="Tice H."/>
            <person name="Pitluck S."/>
            <person name="Bruce D."/>
            <person name="Goodwin L."/>
            <person name="Thompson L.S."/>
            <person name="Brettin T."/>
            <person name="Detter J.C."/>
            <person name="Han C."/>
            <person name="Schmutz J."/>
            <person name="Larimer F."/>
            <person name="Land M."/>
            <person name="Hauser L."/>
            <person name="Kyrpides N."/>
            <person name="Kim E."/>
            <person name="Stephens C."/>
            <person name="Richardson P."/>
        </authorList>
    </citation>
    <scope>NUCLEOTIDE SEQUENCE [LARGE SCALE GENOMIC DNA]</scope>
    <source>
        <strain>K31</strain>
    </source>
</reference>
<organism>
    <name type="scientific">Caulobacter sp. (strain K31)</name>
    <dbReference type="NCBI Taxonomy" id="366602"/>
    <lineage>
        <taxon>Bacteria</taxon>
        <taxon>Pseudomonadati</taxon>
        <taxon>Pseudomonadota</taxon>
        <taxon>Alphaproteobacteria</taxon>
        <taxon>Caulobacterales</taxon>
        <taxon>Caulobacteraceae</taxon>
        <taxon>Caulobacter</taxon>
    </lineage>
</organism>
<keyword id="KW-0488">Methylation</keyword>
<keyword id="KW-0687">Ribonucleoprotein</keyword>
<keyword id="KW-0689">Ribosomal protein</keyword>
<keyword id="KW-0694">RNA-binding</keyword>
<keyword id="KW-0699">rRNA-binding</keyword>
<keyword id="KW-0820">tRNA-binding</keyword>
<comment type="function">
    <text evidence="2">With S4 and S5 plays an important role in translational accuracy.</text>
</comment>
<comment type="function">
    <text evidence="2">Interacts with and stabilizes bases of the 16S rRNA that are involved in tRNA selection in the A site and with the mRNA backbone. Located at the interface of the 30S and 50S subunits, it traverses the body of the 30S subunit contacting proteins on the other side and probably holding the rRNA structure together. The combined cluster of proteins S8, S12 and S17 appears to hold together the shoulder and platform of the 30S subunit.</text>
</comment>
<comment type="subunit">
    <text evidence="2">Part of the 30S ribosomal subunit. Contacts proteins S8 and S17. May interact with IF1 in the 30S initiation complex.</text>
</comment>
<comment type="similarity">
    <text evidence="2">Belongs to the universal ribosomal protein uS12 family.</text>
</comment>
<evidence type="ECO:0000250" key="1"/>
<evidence type="ECO:0000255" key="2">
    <source>
        <dbReference type="HAMAP-Rule" id="MF_00403"/>
    </source>
</evidence>
<evidence type="ECO:0000305" key="3"/>
<proteinExistence type="inferred from homology"/>
<feature type="chain" id="PRO_1000080385" description="Small ribosomal subunit protein uS12">
    <location>
        <begin position="1"/>
        <end position="123"/>
    </location>
</feature>
<feature type="modified residue" description="3-methylthioaspartic acid" evidence="1">
    <location>
        <position position="89"/>
    </location>
</feature>
<sequence length="123" mass="13852">MPTVNQLIRKPRQPKPVRNKVPALKGCPQRRGVCTRVYTTTPKKPNSALRKVAKVRLTTGIEAVCYIPGEGHNLQEHSVVLIRGGRVKDLPGVRYHILRGVLDTQGVKDRKQRRSLYGAKRPK</sequence>
<protein>
    <recommendedName>
        <fullName evidence="2">Small ribosomal subunit protein uS12</fullName>
    </recommendedName>
    <alternativeName>
        <fullName evidence="3">30S ribosomal protein S12</fullName>
    </alternativeName>
</protein>
<gene>
    <name evidence="2" type="primary">rpsL</name>
    <name type="ordered locus">Caul_0801</name>
</gene>
<name>RS12_CAUSK</name>
<dbReference type="EMBL" id="CP000927">
    <property type="protein sequence ID" value="ABZ69932.1"/>
    <property type="molecule type" value="Genomic_DNA"/>
</dbReference>
<dbReference type="SMR" id="B0SUQ4"/>
<dbReference type="STRING" id="366602.Caul_0801"/>
<dbReference type="KEGG" id="cak:Caul_0801"/>
<dbReference type="eggNOG" id="COG0048">
    <property type="taxonomic scope" value="Bacteria"/>
</dbReference>
<dbReference type="HOGENOM" id="CLU_104295_1_2_5"/>
<dbReference type="OrthoDB" id="9802366at2"/>
<dbReference type="GO" id="GO:0015935">
    <property type="term" value="C:small ribosomal subunit"/>
    <property type="evidence" value="ECO:0007669"/>
    <property type="project" value="InterPro"/>
</dbReference>
<dbReference type="GO" id="GO:0019843">
    <property type="term" value="F:rRNA binding"/>
    <property type="evidence" value="ECO:0007669"/>
    <property type="project" value="UniProtKB-UniRule"/>
</dbReference>
<dbReference type="GO" id="GO:0003735">
    <property type="term" value="F:structural constituent of ribosome"/>
    <property type="evidence" value="ECO:0007669"/>
    <property type="project" value="InterPro"/>
</dbReference>
<dbReference type="GO" id="GO:0000049">
    <property type="term" value="F:tRNA binding"/>
    <property type="evidence" value="ECO:0007669"/>
    <property type="project" value="UniProtKB-UniRule"/>
</dbReference>
<dbReference type="GO" id="GO:0006412">
    <property type="term" value="P:translation"/>
    <property type="evidence" value="ECO:0007669"/>
    <property type="project" value="UniProtKB-UniRule"/>
</dbReference>
<dbReference type="CDD" id="cd03368">
    <property type="entry name" value="Ribosomal_S12"/>
    <property type="match status" value="1"/>
</dbReference>
<dbReference type="FunFam" id="2.40.50.140:FF:000001">
    <property type="entry name" value="30S ribosomal protein S12"/>
    <property type="match status" value="1"/>
</dbReference>
<dbReference type="Gene3D" id="2.40.50.140">
    <property type="entry name" value="Nucleic acid-binding proteins"/>
    <property type="match status" value="1"/>
</dbReference>
<dbReference type="HAMAP" id="MF_00403_B">
    <property type="entry name" value="Ribosomal_uS12_B"/>
    <property type="match status" value="1"/>
</dbReference>
<dbReference type="InterPro" id="IPR012340">
    <property type="entry name" value="NA-bd_OB-fold"/>
</dbReference>
<dbReference type="InterPro" id="IPR006032">
    <property type="entry name" value="Ribosomal_uS12"/>
</dbReference>
<dbReference type="InterPro" id="IPR005679">
    <property type="entry name" value="Ribosomal_uS12_bac"/>
</dbReference>
<dbReference type="NCBIfam" id="TIGR00981">
    <property type="entry name" value="rpsL_bact"/>
    <property type="match status" value="1"/>
</dbReference>
<dbReference type="PANTHER" id="PTHR11652">
    <property type="entry name" value="30S RIBOSOMAL PROTEIN S12 FAMILY MEMBER"/>
    <property type="match status" value="1"/>
</dbReference>
<dbReference type="Pfam" id="PF00164">
    <property type="entry name" value="Ribosom_S12_S23"/>
    <property type="match status" value="1"/>
</dbReference>
<dbReference type="PIRSF" id="PIRSF002133">
    <property type="entry name" value="Ribosomal_S12/S23"/>
    <property type="match status" value="1"/>
</dbReference>
<dbReference type="PRINTS" id="PR01034">
    <property type="entry name" value="RIBOSOMALS12"/>
</dbReference>
<dbReference type="SUPFAM" id="SSF50249">
    <property type="entry name" value="Nucleic acid-binding proteins"/>
    <property type="match status" value="1"/>
</dbReference>
<dbReference type="PROSITE" id="PS00055">
    <property type="entry name" value="RIBOSOMAL_S12"/>
    <property type="match status" value="1"/>
</dbReference>